<gene>
    <name evidence="6" type="primary">ospZ</name>
    <name evidence="8" type="ORF">BL724_21090</name>
</gene>
<feature type="chain" id="PRO_0000452527" description="Cysteine S-methyltransferase OspZ">
    <location>
        <begin position="1"/>
        <end position="230"/>
    </location>
</feature>
<feature type="region of interest" description="Interaction with host proteins TAB2, TAB3 and ZRANB3" evidence="2">
    <location>
        <begin position="49"/>
        <end position="52"/>
    </location>
</feature>
<feature type="binding site" evidence="4">
    <location>
        <position position="92"/>
    </location>
    <ligand>
        <name>S-adenosyl-L-methionine</name>
        <dbReference type="ChEBI" id="CHEBI:59789"/>
    </ligand>
</feature>
<feature type="binding site" evidence="4">
    <location>
        <position position="98"/>
    </location>
    <ligand>
        <name>S-adenosyl-L-methionine</name>
        <dbReference type="ChEBI" id="CHEBI:59789"/>
    </ligand>
</feature>
<feature type="binding site" evidence="4">
    <location>
        <position position="107"/>
    </location>
    <ligand>
        <name>S-adenosyl-L-methionine</name>
        <dbReference type="ChEBI" id="CHEBI:59789"/>
    </ligand>
</feature>
<feature type="binding site" evidence="4">
    <location>
        <position position="111"/>
    </location>
    <ligand>
        <name>S-adenosyl-L-methionine</name>
        <dbReference type="ChEBI" id="CHEBI:59789"/>
    </ligand>
</feature>
<feature type="binding site" evidence="4">
    <location>
        <position position="204"/>
    </location>
    <ligand>
        <name>S-adenosyl-L-methionine</name>
        <dbReference type="ChEBI" id="CHEBI:59789"/>
    </ligand>
</feature>
<feature type="binding site" evidence="4">
    <location>
        <position position="208"/>
    </location>
    <ligand>
        <name>S-adenosyl-L-methionine</name>
        <dbReference type="ChEBI" id="CHEBI:59789"/>
    </ligand>
</feature>
<dbReference type="EC" id="2.1.1.-" evidence="1"/>
<dbReference type="EMBL" id="AAAGUA010000258">
    <property type="protein sequence ID" value="EAC1015399.1"/>
    <property type="molecule type" value="Genomic_DNA"/>
</dbReference>
<dbReference type="RefSeq" id="WP_073832157.1">
    <property type="nucleotide sequence ID" value="NZ_CP026767.1"/>
</dbReference>
<dbReference type="SMR" id="A0A3Z7J6R4"/>
<dbReference type="GO" id="GO:0005576">
    <property type="term" value="C:extracellular region"/>
    <property type="evidence" value="ECO:0007669"/>
    <property type="project" value="UniProtKB-SubCell"/>
</dbReference>
<dbReference type="GO" id="GO:0030430">
    <property type="term" value="C:host cell cytoplasm"/>
    <property type="evidence" value="ECO:0007669"/>
    <property type="project" value="UniProtKB-SubCell"/>
</dbReference>
<dbReference type="GO" id="GO:0042025">
    <property type="term" value="C:host cell nucleus"/>
    <property type="evidence" value="ECO:0007669"/>
    <property type="project" value="UniProtKB-SubCell"/>
</dbReference>
<dbReference type="GO" id="GO:0008168">
    <property type="term" value="F:methyltransferase activity"/>
    <property type="evidence" value="ECO:0007669"/>
    <property type="project" value="UniProtKB-KW"/>
</dbReference>
<dbReference type="GO" id="GO:0090729">
    <property type="term" value="F:toxin activity"/>
    <property type="evidence" value="ECO:0007669"/>
    <property type="project" value="UniProtKB-KW"/>
</dbReference>
<dbReference type="GO" id="GO:0032259">
    <property type="term" value="P:methylation"/>
    <property type="evidence" value="ECO:0007669"/>
    <property type="project" value="UniProtKB-KW"/>
</dbReference>
<dbReference type="GO" id="GO:0085034">
    <property type="term" value="P:symbiont-mediated suppression of host NF-kappaB cascade"/>
    <property type="evidence" value="ECO:0000314"/>
    <property type="project" value="UniProtKB"/>
</dbReference>
<dbReference type="InterPro" id="IPR048901">
    <property type="entry name" value="NleE/OspZ"/>
</dbReference>
<dbReference type="NCBIfam" id="NF033830">
    <property type="entry name" value="NleE_fam_methyl"/>
    <property type="match status" value="1"/>
</dbReference>
<dbReference type="Pfam" id="PF20798">
    <property type="entry name" value="NleE"/>
    <property type="match status" value="1"/>
</dbReference>
<evidence type="ECO:0000250" key="1">
    <source>
        <dbReference type="UniProtKB" id="A0A3T2V133"/>
    </source>
</evidence>
<evidence type="ECO:0000250" key="2">
    <source>
        <dbReference type="UniProtKB" id="B7UI22"/>
    </source>
</evidence>
<evidence type="ECO:0000250" key="3">
    <source>
        <dbReference type="UniProtKB" id="Q2TH00"/>
    </source>
</evidence>
<evidence type="ECO:0000250" key="4">
    <source>
        <dbReference type="UniProtKB" id="Q7DBA6"/>
    </source>
</evidence>
<evidence type="ECO:0000269" key="5">
    <source>
    </source>
</evidence>
<evidence type="ECO:0000303" key="6">
    <source>
    </source>
</evidence>
<evidence type="ECO:0000305" key="7"/>
<evidence type="ECO:0000312" key="8">
    <source>
        <dbReference type="EMBL" id="EAC1015399.1"/>
    </source>
</evidence>
<name>OSPZ_SHIBO</name>
<comment type="function">
    <text evidence="1 5">Cysteine methyltransferase effector that inhibits host cell NF-kappa-B activation by preventing nuclear translocation of host protein RELA/p65 (PubMed:20485572). Acts by mediating cysteine methylation of host proteins TAB2 and TAB3: methylation of a conserved cysteine residue of the RanBP2-type zinc finger (NZF) of TAB2 and TAB3 disrupts zinc-binding, thereby inactivating the ubiquitin chain-binding activity of TAB2 and TAB3, leading to NF-kappa-B inactivation. Also mediates cysteine methylation of host protein ZRANB3, inactivating its ability to bind ubiquitin chains (By similarity).</text>
</comment>
<comment type="catalytic activity">
    <reaction evidence="1">
        <text>L-cysteinyl-[protein] + S-adenosyl-L-methionine = S-methyl-L-cysteinyl-[protein] + S-adenosyl-L-homocysteine + H(+)</text>
        <dbReference type="Rhea" id="RHEA:66544"/>
        <dbReference type="Rhea" id="RHEA-COMP:10131"/>
        <dbReference type="Rhea" id="RHEA-COMP:10132"/>
        <dbReference type="ChEBI" id="CHEBI:15378"/>
        <dbReference type="ChEBI" id="CHEBI:29950"/>
        <dbReference type="ChEBI" id="CHEBI:57856"/>
        <dbReference type="ChEBI" id="CHEBI:59789"/>
        <dbReference type="ChEBI" id="CHEBI:82612"/>
    </reaction>
    <physiologicalReaction direction="left-to-right" evidence="1">
        <dbReference type="Rhea" id="RHEA:66545"/>
    </physiologicalReaction>
</comment>
<comment type="subunit">
    <text evidence="4">Monomer.</text>
</comment>
<comment type="subcellular location">
    <subcellularLocation>
        <location evidence="3">Secreted</location>
    </subcellularLocation>
    <subcellularLocation>
        <location evidence="3">Host cytoplasm</location>
    </subcellularLocation>
    <subcellularLocation>
        <location evidence="3">Host nucleus</location>
    </subcellularLocation>
    <text evidence="3">Secreted via the type III secretion system (T3SS). Mainly localizes in the cytoplasm of the infected cells, and occasionaly in the host nucleus.</text>
</comment>
<comment type="similarity">
    <text evidence="7">Belongs to the NleE/OspZ family.</text>
</comment>
<sequence>MISPIKNIKNVFPINTANTEYIVRNIYPRVEHGYFNESPNIYDKKYISGITRNMAQLKIEEFINEKSRRLNYMKTMYSPCPEDFQPISRDEASIPEGSWLTVISGKRPMGQFSVDSLYHPDLHALCELPEISCKIFPKENSDFLYIIVVFRNDSPQGELRTNRFIELYDIKREIMQVLRDESPELKSIKSEIIIAREMGELFSYASEEIDSYIKQMNDRFSQIKARMSVT</sequence>
<reference key="1">
    <citation type="submission" date="2018-08" db="EMBL/GenBank/DDBJ databases">
        <authorList>
            <person name="Ashton P.M."/>
            <person name="Dallman T."/>
            <person name="Nair S."/>
            <person name="De Pinna E."/>
            <person name="Peters T."/>
            <person name="Grant K."/>
        </authorList>
    </citation>
    <scope>NUCLEOTIDE SEQUENCE [LARGE SCALE GENOMIC DNA]</scope>
    <source>
        <strain>279349</strain>
    </source>
</reference>
<reference key="2">
    <citation type="journal article" date="2010" name="PLoS Pathog.">
        <title>The type III effectors NleE and NleB from enteropathogenic E. coli and OspZ from Shigella block nuclear translocation of NF-kappaB p65.</title>
        <authorList>
            <person name="Newton H.J."/>
            <person name="Pearson J.S."/>
            <person name="Badea L."/>
            <person name="Kelly M."/>
            <person name="Lucas M."/>
            <person name="Holloway G."/>
            <person name="Wagstaff K.M."/>
            <person name="Dunstone M.A."/>
            <person name="Sloan J."/>
            <person name="Whisstock J.C."/>
            <person name="Kaper J.B."/>
            <person name="Robins-Browne R.M."/>
            <person name="Jans D.A."/>
            <person name="Frankel G."/>
            <person name="Phillips A.D."/>
            <person name="Coulson B.S."/>
            <person name="Hartland E.L."/>
        </authorList>
    </citation>
    <scope>FUNCTION</scope>
    <source>
        <strain>SBA1384</strain>
    </source>
</reference>
<protein>
    <recommendedName>
        <fullName evidence="7">Cysteine S-methyltransferase OspZ</fullName>
        <ecNumber evidence="1">2.1.1.-</ecNumber>
    </recommendedName>
    <alternativeName>
        <fullName evidence="6">Effector protein OspZ</fullName>
    </alternativeName>
</protein>
<keyword id="KW-1035">Host cytoplasm</keyword>
<keyword id="KW-1048">Host nucleus</keyword>
<keyword id="KW-0489">Methyltransferase</keyword>
<keyword id="KW-0949">S-adenosyl-L-methionine</keyword>
<keyword id="KW-0964">Secreted</keyword>
<keyword id="KW-0800">Toxin</keyword>
<keyword id="KW-0808">Transferase</keyword>
<keyword id="KW-0843">Virulence</keyword>
<accession>A0A3Z7J6R4</accession>
<organism>
    <name type="scientific">Shigella boydii</name>
    <dbReference type="NCBI Taxonomy" id="621"/>
    <lineage>
        <taxon>Bacteria</taxon>
        <taxon>Pseudomonadati</taxon>
        <taxon>Pseudomonadota</taxon>
        <taxon>Gammaproteobacteria</taxon>
        <taxon>Enterobacterales</taxon>
        <taxon>Enterobacteriaceae</taxon>
        <taxon>Shigella</taxon>
    </lineage>
</organism>
<proteinExistence type="inferred from homology"/>